<sequence>MKSVILTGLLFVLLCVDHMSSANQSVVATQLIPINTALTLVMMTTRVIYPTGIPAEDIPRLVSMQVNQAVPMGTTLMPDMVKFYCLCAPKN</sequence>
<feature type="signal peptide" evidence="1">
    <location>
        <begin position="1"/>
        <end position="22"/>
    </location>
</feature>
<feature type="chain" id="PRO_0000001694" description="Ice-structuring protein lambda OP-3">
    <location>
        <begin position="23"/>
        <end position="91"/>
    </location>
</feature>
<feature type="domain" description="AFP-like" evidence="2">
    <location>
        <begin position="25"/>
        <end position="84"/>
    </location>
</feature>
<feature type="site" description="Important for ice-binding" evidence="1">
    <location>
        <position position="30"/>
    </location>
</feature>
<feature type="site" description="Important for ice-binding" evidence="1">
    <location>
        <position position="35"/>
    </location>
</feature>
<feature type="site" description="Important for ice-binding" evidence="1">
    <location>
        <position position="39"/>
    </location>
</feature>
<feature type="site" description="Important for ice-binding" evidence="1">
    <location>
        <position position="65"/>
    </location>
</feature>
<organism>
    <name type="scientific">Zoarces americanus</name>
    <name type="common">Ocean pout</name>
    <name type="synonym">Macrozoarces americanus</name>
    <dbReference type="NCBI Taxonomy" id="8199"/>
    <lineage>
        <taxon>Eukaryota</taxon>
        <taxon>Metazoa</taxon>
        <taxon>Chordata</taxon>
        <taxon>Craniata</taxon>
        <taxon>Vertebrata</taxon>
        <taxon>Euteleostomi</taxon>
        <taxon>Actinopterygii</taxon>
        <taxon>Neopterygii</taxon>
        <taxon>Teleostei</taxon>
        <taxon>Neoteleostei</taxon>
        <taxon>Acanthomorphata</taxon>
        <taxon>Eupercaria</taxon>
        <taxon>Perciformes</taxon>
        <taxon>Cottioidei</taxon>
        <taxon>Zoarcales</taxon>
        <taxon>Zoarcidae</taxon>
        <taxon>Zoarcinae</taxon>
        <taxon>Zoarces</taxon>
    </lineage>
</organism>
<name>ANP3_ZOAAM</name>
<dbReference type="EMBL" id="J03923">
    <property type="protein sequence ID" value="AAA49348.1"/>
    <property type="molecule type" value="Genomic_DNA"/>
</dbReference>
<dbReference type="PIR" id="B30839">
    <property type="entry name" value="B30839"/>
</dbReference>
<dbReference type="SMR" id="P19606"/>
<dbReference type="GO" id="GO:0005576">
    <property type="term" value="C:extracellular region"/>
    <property type="evidence" value="ECO:0007669"/>
    <property type="project" value="UniProtKB-SubCell"/>
</dbReference>
<dbReference type="CDD" id="cd11617">
    <property type="entry name" value="Antifreeze_III"/>
    <property type="match status" value="1"/>
</dbReference>
<dbReference type="Gene3D" id="3.90.1210.10">
    <property type="entry name" value="Antifreeze-like/N-acetylneuraminic acid synthase C-terminal domain"/>
    <property type="match status" value="1"/>
</dbReference>
<dbReference type="InterPro" id="IPR006190">
    <property type="entry name" value="AFP_Neu5c_C"/>
</dbReference>
<dbReference type="InterPro" id="IPR036732">
    <property type="entry name" value="AFP_Neu5c_C_sf"/>
</dbReference>
<dbReference type="InterPro" id="IPR006013">
    <property type="entry name" value="Antifreeze_III"/>
</dbReference>
<dbReference type="PRINTS" id="PR00357">
    <property type="entry name" value="ANTIFREEZIII"/>
</dbReference>
<dbReference type="SUPFAM" id="SSF51269">
    <property type="entry name" value="AFP III-like domain"/>
    <property type="match status" value="1"/>
</dbReference>
<dbReference type="PROSITE" id="PS50844">
    <property type="entry name" value="AFP_LIKE"/>
    <property type="match status" value="1"/>
</dbReference>
<protein>
    <recommendedName>
        <fullName>Ice-structuring protein lambda OP-3</fullName>
        <shortName>ISP lambda OP-3</shortName>
    </recommendedName>
    <alternativeName>
        <fullName>Antifreeze protein lambda OP-3</fullName>
    </alternativeName>
</protein>
<reference key="1">
    <citation type="journal article" date="1988" name="J. Biol. Chem.">
        <title>Multiple genes provide the basis for antifreeze protein diversity and dosage in the ocean pout, Macrozoarces americanus.</title>
        <authorList>
            <person name="Hew C.-L."/>
            <person name="Wang N.-C."/>
            <person name="Joshi S."/>
            <person name="Fletcher G.L."/>
            <person name="Scott G.K."/>
            <person name="Hayes P.H."/>
            <person name="Buettner B."/>
            <person name="Davies P.L."/>
        </authorList>
    </citation>
    <scope>NUCLEOTIDE SEQUENCE [GENOMIC DNA]</scope>
</reference>
<keyword id="KW-0047">Antifreeze protein</keyword>
<keyword id="KW-0964">Secreted</keyword>
<keyword id="KW-0732">Signal</keyword>
<evidence type="ECO:0000250" key="1"/>
<evidence type="ECO:0000255" key="2">
    <source>
        <dbReference type="PROSITE-ProRule" id="PRU00021"/>
    </source>
</evidence>
<evidence type="ECO:0000305" key="3"/>
<proteinExistence type="inferred from homology"/>
<comment type="function">
    <text evidence="1">Contributes to protect fish blood from freezing at subzero sea water temperatures. Lowers the blood freezing point. Binds to nascent ice crystals and prevents further growth (By similarity).</text>
</comment>
<comment type="subcellular location">
    <subcellularLocation>
        <location evidence="1">Secreted</location>
    </subcellularLocation>
</comment>
<comment type="similarity">
    <text evidence="3">Belongs to the type-III AFP family.</text>
</comment>
<accession>P19606</accession>